<evidence type="ECO:0000255" key="1">
    <source>
        <dbReference type="HAMAP-Rule" id="MF_00071"/>
    </source>
</evidence>
<proteinExistence type="inferred from homology"/>
<sequence>MDHIRNFSIIAHIDHGKSTLADRIIQICGGLSDREMEAQVLDSMDLERERGITIKAQTAALSYRARDGKLYNLNMIDTPGHVDFSYEVSRSLSACEGALLVVDASQGVEAQTVANCYTAIELGVEVVPVLNKIDLPAANPENAIAEIEDVIGIDAADATPCSAKTGMGVEDVLEALIAKVPPPKGDAGQPLQALIIDSWFDNYVGVVMLVRIVNGTLRPKDRIRLMATGAEYPVEHVGVFTPKSKNLESLSAGQVGFIIAGIKELTAAKVGDTVTTVKNAAPEPLPGFKEVKPQVFAGLYPVEANQYDALRESLEKLKLNDASLMYEPEVSQALGFGFRCGFLGLLHMEIVQERLEREFDMDLITTAPTVVYEVVQRDGTTIMVENPAKMPDPSKIEEVREPIVTVNLYMPQDYVGSVITLCTQKRGVQINMQYHGRQVQLTYEIPMGEIVLDFFDRLKSVSRGYASMDYEFKEYRASDVVKVDMLINGDKVDALSVIVHRSQSQYRGREVASKMREIIPRQMYDVAIQATIGAHIIARENIKALRKNVLAKCYGGDITRKKKLLEKQKEGKKRMKQVGSVEIPQEAFLAILRVEDK</sequence>
<gene>
    <name evidence="1" type="primary">lepA</name>
    <name type="ordered locus">Bphy_0839</name>
</gene>
<comment type="function">
    <text evidence="1">Required for accurate and efficient protein synthesis under certain stress conditions. May act as a fidelity factor of the translation reaction, by catalyzing a one-codon backward translocation of tRNAs on improperly translocated ribosomes. Back-translocation proceeds from a post-translocation (POST) complex to a pre-translocation (PRE) complex, thus giving elongation factor G a second chance to translocate the tRNAs correctly. Binds to ribosomes in a GTP-dependent manner.</text>
</comment>
<comment type="catalytic activity">
    <reaction evidence="1">
        <text>GTP + H2O = GDP + phosphate + H(+)</text>
        <dbReference type="Rhea" id="RHEA:19669"/>
        <dbReference type="ChEBI" id="CHEBI:15377"/>
        <dbReference type="ChEBI" id="CHEBI:15378"/>
        <dbReference type="ChEBI" id="CHEBI:37565"/>
        <dbReference type="ChEBI" id="CHEBI:43474"/>
        <dbReference type="ChEBI" id="CHEBI:58189"/>
        <dbReference type="EC" id="3.6.5.n1"/>
    </reaction>
</comment>
<comment type="subcellular location">
    <subcellularLocation>
        <location evidence="1">Cell inner membrane</location>
        <topology evidence="1">Peripheral membrane protein</topology>
        <orientation evidence="1">Cytoplasmic side</orientation>
    </subcellularLocation>
</comment>
<comment type="similarity">
    <text evidence="1">Belongs to the TRAFAC class translation factor GTPase superfamily. Classic translation factor GTPase family. LepA subfamily.</text>
</comment>
<reference key="1">
    <citation type="journal article" date="2014" name="Stand. Genomic Sci.">
        <title>Complete genome sequence of Burkholderia phymatum STM815(T), a broad host range and efficient nitrogen-fixing symbiont of Mimosa species.</title>
        <authorList>
            <person name="Moulin L."/>
            <person name="Klonowska A."/>
            <person name="Caroline B."/>
            <person name="Booth K."/>
            <person name="Vriezen J.A."/>
            <person name="Melkonian R."/>
            <person name="James E.K."/>
            <person name="Young J.P."/>
            <person name="Bena G."/>
            <person name="Hauser L."/>
            <person name="Land M."/>
            <person name="Kyrpides N."/>
            <person name="Bruce D."/>
            <person name="Chain P."/>
            <person name="Copeland A."/>
            <person name="Pitluck S."/>
            <person name="Woyke T."/>
            <person name="Lizotte-Waniewski M."/>
            <person name="Bristow J."/>
            <person name="Riley M."/>
        </authorList>
    </citation>
    <scope>NUCLEOTIDE SEQUENCE [LARGE SCALE GENOMIC DNA]</scope>
    <source>
        <strain>DSM 17167 / CIP 108236 / LMG 21445 / STM815</strain>
    </source>
</reference>
<protein>
    <recommendedName>
        <fullName evidence="1">Elongation factor 4</fullName>
        <shortName evidence="1">EF-4</shortName>
        <ecNumber evidence="1">3.6.5.n1</ecNumber>
    </recommendedName>
    <alternativeName>
        <fullName evidence="1">Ribosomal back-translocase LepA</fullName>
    </alternativeName>
</protein>
<keyword id="KW-0997">Cell inner membrane</keyword>
<keyword id="KW-1003">Cell membrane</keyword>
<keyword id="KW-0342">GTP-binding</keyword>
<keyword id="KW-0378">Hydrolase</keyword>
<keyword id="KW-0472">Membrane</keyword>
<keyword id="KW-0547">Nucleotide-binding</keyword>
<keyword id="KW-0648">Protein biosynthesis</keyword>
<keyword id="KW-1185">Reference proteome</keyword>
<accession>B2JFK0</accession>
<feature type="chain" id="PRO_1000092379" description="Elongation factor 4">
    <location>
        <begin position="1"/>
        <end position="597"/>
    </location>
</feature>
<feature type="domain" description="tr-type G">
    <location>
        <begin position="2"/>
        <end position="184"/>
    </location>
</feature>
<feature type="binding site" evidence="1">
    <location>
        <begin position="14"/>
        <end position="19"/>
    </location>
    <ligand>
        <name>GTP</name>
        <dbReference type="ChEBI" id="CHEBI:37565"/>
    </ligand>
</feature>
<feature type="binding site" evidence="1">
    <location>
        <begin position="131"/>
        <end position="134"/>
    </location>
    <ligand>
        <name>GTP</name>
        <dbReference type="ChEBI" id="CHEBI:37565"/>
    </ligand>
</feature>
<name>LEPA_PARP8</name>
<dbReference type="EC" id="3.6.5.n1" evidence="1"/>
<dbReference type="EMBL" id="CP001043">
    <property type="protein sequence ID" value="ACC70028.1"/>
    <property type="molecule type" value="Genomic_DNA"/>
</dbReference>
<dbReference type="RefSeq" id="WP_012400247.1">
    <property type="nucleotide sequence ID" value="NC_010622.1"/>
</dbReference>
<dbReference type="SMR" id="B2JFK0"/>
<dbReference type="STRING" id="391038.Bphy_0839"/>
<dbReference type="KEGG" id="bph:Bphy_0839"/>
<dbReference type="eggNOG" id="COG0481">
    <property type="taxonomic scope" value="Bacteria"/>
</dbReference>
<dbReference type="HOGENOM" id="CLU_009995_3_3_4"/>
<dbReference type="OrthoDB" id="9801472at2"/>
<dbReference type="Proteomes" id="UP000001192">
    <property type="component" value="Chromosome 1"/>
</dbReference>
<dbReference type="GO" id="GO:0005886">
    <property type="term" value="C:plasma membrane"/>
    <property type="evidence" value="ECO:0007669"/>
    <property type="project" value="UniProtKB-SubCell"/>
</dbReference>
<dbReference type="GO" id="GO:0005525">
    <property type="term" value="F:GTP binding"/>
    <property type="evidence" value="ECO:0007669"/>
    <property type="project" value="UniProtKB-UniRule"/>
</dbReference>
<dbReference type="GO" id="GO:0003924">
    <property type="term" value="F:GTPase activity"/>
    <property type="evidence" value="ECO:0007669"/>
    <property type="project" value="UniProtKB-UniRule"/>
</dbReference>
<dbReference type="GO" id="GO:0097216">
    <property type="term" value="F:guanosine tetraphosphate binding"/>
    <property type="evidence" value="ECO:0007669"/>
    <property type="project" value="UniProtKB-ARBA"/>
</dbReference>
<dbReference type="GO" id="GO:0043022">
    <property type="term" value="F:ribosome binding"/>
    <property type="evidence" value="ECO:0007669"/>
    <property type="project" value="UniProtKB-UniRule"/>
</dbReference>
<dbReference type="GO" id="GO:0003746">
    <property type="term" value="F:translation elongation factor activity"/>
    <property type="evidence" value="ECO:0007669"/>
    <property type="project" value="UniProtKB-UniRule"/>
</dbReference>
<dbReference type="GO" id="GO:0045727">
    <property type="term" value="P:positive regulation of translation"/>
    <property type="evidence" value="ECO:0007669"/>
    <property type="project" value="UniProtKB-UniRule"/>
</dbReference>
<dbReference type="CDD" id="cd03699">
    <property type="entry name" value="EF4_II"/>
    <property type="match status" value="1"/>
</dbReference>
<dbReference type="CDD" id="cd16260">
    <property type="entry name" value="EF4_III"/>
    <property type="match status" value="1"/>
</dbReference>
<dbReference type="CDD" id="cd01890">
    <property type="entry name" value="LepA"/>
    <property type="match status" value="1"/>
</dbReference>
<dbReference type="CDD" id="cd03709">
    <property type="entry name" value="lepA_C"/>
    <property type="match status" value="1"/>
</dbReference>
<dbReference type="FunFam" id="3.40.50.300:FF:000078">
    <property type="entry name" value="Elongation factor 4"/>
    <property type="match status" value="1"/>
</dbReference>
<dbReference type="FunFam" id="2.40.30.10:FF:000015">
    <property type="entry name" value="Translation factor GUF1, mitochondrial"/>
    <property type="match status" value="1"/>
</dbReference>
<dbReference type="FunFam" id="3.30.70.240:FF:000007">
    <property type="entry name" value="Translation factor GUF1, mitochondrial"/>
    <property type="match status" value="1"/>
</dbReference>
<dbReference type="FunFam" id="3.30.70.2570:FF:000001">
    <property type="entry name" value="Translation factor GUF1, mitochondrial"/>
    <property type="match status" value="1"/>
</dbReference>
<dbReference type="FunFam" id="3.30.70.870:FF:000004">
    <property type="entry name" value="Translation factor GUF1, mitochondrial"/>
    <property type="match status" value="1"/>
</dbReference>
<dbReference type="Gene3D" id="3.30.70.240">
    <property type="match status" value="1"/>
</dbReference>
<dbReference type="Gene3D" id="3.30.70.2570">
    <property type="entry name" value="Elongation factor 4, C-terminal domain"/>
    <property type="match status" value="1"/>
</dbReference>
<dbReference type="Gene3D" id="3.30.70.870">
    <property type="entry name" value="Elongation Factor G (Translational Gtpase), domain 3"/>
    <property type="match status" value="1"/>
</dbReference>
<dbReference type="Gene3D" id="3.40.50.300">
    <property type="entry name" value="P-loop containing nucleotide triphosphate hydrolases"/>
    <property type="match status" value="1"/>
</dbReference>
<dbReference type="Gene3D" id="2.40.30.10">
    <property type="entry name" value="Translation factors"/>
    <property type="match status" value="1"/>
</dbReference>
<dbReference type="HAMAP" id="MF_00071">
    <property type="entry name" value="LepA"/>
    <property type="match status" value="1"/>
</dbReference>
<dbReference type="InterPro" id="IPR006297">
    <property type="entry name" value="EF-4"/>
</dbReference>
<dbReference type="InterPro" id="IPR035647">
    <property type="entry name" value="EFG_III/V"/>
</dbReference>
<dbReference type="InterPro" id="IPR000640">
    <property type="entry name" value="EFG_V-like"/>
</dbReference>
<dbReference type="InterPro" id="IPR004161">
    <property type="entry name" value="EFTu-like_2"/>
</dbReference>
<dbReference type="InterPro" id="IPR031157">
    <property type="entry name" value="G_TR_CS"/>
</dbReference>
<dbReference type="InterPro" id="IPR038363">
    <property type="entry name" value="LepA_C_sf"/>
</dbReference>
<dbReference type="InterPro" id="IPR013842">
    <property type="entry name" value="LepA_CTD"/>
</dbReference>
<dbReference type="InterPro" id="IPR035654">
    <property type="entry name" value="LepA_IV"/>
</dbReference>
<dbReference type="InterPro" id="IPR027417">
    <property type="entry name" value="P-loop_NTPase"/>
</dbReference>
<dbReference type="InterPro" id="IPR005225">
    <property type="entry name" value="Small_GTP-bd"/>
</dbReference>
<dbReference type="InterPro" id="IPR000795">
    <property type="entry name" value="T_Tr_GTP-bd_dom"/>
</dbReference>
<dbReference type="InterPro" id="IPR009000">
    <property type="entry name" value="Transl_B-barrel_sf"/>
</dbReference>
<dbReference type="NCBIfam" id="TIGR01393">
    <property type="entry name" value="lepA"/>
    <property type="match status" value="1"/>
</dbReference>
<dbReference type="NCBIfam" id="TIGR00231">
    <property type="entry name" value="small_GTP"/>
    <property type="match status" value="1"/>
</dbReference>
<dbReference type="PANTHER" id="PTHR43512:SF4">
    <property type="entry name" value="TRANSLATION FACTOR GUF1 HOMOLOG, CHLOROPLASTIC"/>
    <property type="match status" value="1"/>
</dbReference>
<dbReference type="PANTHER" id="PTHR43512">
    <property type="entry name" value="TRANSLATION FACTOR GUF1-RELATED"/>
    <property type="match status" value="1"/>
</dbReference>
<dbReference type="Pfam" id="PF00679">
    <property type="entry name" value="EFG_C"/>
    <property type="match status" value="1"/>
</dbReference>
<dbReference type="Pfam" id="PF00009">
    <property type="entry name" value="GTP_EFTU"/>
    <property type="match status" value="1"/>
</dbReference>
<dbReference type="Pfam" id="PF03144">
    <property type="entry name" value="GTP_EFTU_D2"/>
    <property type="match status" value="1"/>
</dbReference>
<dbReference type="Pfam" id="PF06421">
    <property type="entry name" value="LepA_C"/>
    <property type="match status" value="1"/>
</dbReference>
<dbReference type="PRINTS" id="PR00315">
    <property type="entry name" value="ELONGATNFCT"/>
</dbReference>
<dbReference type="SMART" id="SM00838">
    <property type="entry name" value="EFG_C"/>
    <property type="match status" value="1"/>
</dbReference>
<dbReference type="SUPFAM" id="SSF54980">
    <property type="entry name" value="EF-G C-terminal domain-like"/>
    <property type="match status" value="2"/>
</dbReference>
<dbReference type="SUPFAM" id="SSF52540">
    <property type="entry name" value="P-loop containing nucleoside triphosphate hydrolases"/>
    <property type="match status" value="1"/>
</dbReference>
<dbReference type="SUPFAM" id="SSF50447">
    <property type="entry name" value="Translation proteins"/>
    <property type="match status" value="1"/>
</dbReference>
<dbReference type="PROSITE" id="PS00301">
    <property type="entry name" value="G_TR_1"/>
    <property type="match status" value="1"/>
</dbReference>
<dbReference type="PROSITE" id="PS51722">
    <property type="entry name" value="G_TR_2"/>
    <property type="match status" value="1"/>
</dbReference>
<organism>
    <name type="scientific">Paraburkholderia phymatum (strain DSM 17167 / CIP 108236 / LMG 21445 / STM815)</name>
    <name type="common">Burkholderia phymatum</name>
    <dbReference type="NCBI Taxonomy" id="391038"/>
    <lineage>
        <taxon>Bacteria</taxon>
        <taxon>Pseudomonadati</taxon>
        <taxon>Pseudomonadota</taxon>
        <taxon>Betaproteobacteria</taxon>
        <taxon>Burkholderiales</taxon>
        <taxon>Burkholderiaceae</taxon>
        <taxon>Paraburkholderia</taxon>
    </lineage>
</organism>